<organism>
    <name type="scientific">Pongo abelii</name>
    <name type="common">Sumatran orangutan</name>
    <name type="synonym">Pongo pygmaeus abelii</name>
    <dbReference type="NCBI Taxonomy" id="9601"/>
    <lineage>
        <taxon>Eukaryota</taxon>
        <taxon>Metazoa</taxon>
        <taxon>Chordata</taxon>
        <taxon>Craniata</taxon>
        <taxon>Vertebrata</taxon>
        <taxon>Euteleostomi</taxon>
        <taxon>Mammalia</taxon>
        <taxon>Eutheria</taxon>
        <taxon>Euarchontoglires</taxon>
        <taxon>Primates</taxon>
        <taxon>Haplorrhini</taxon>
        <taxon>Catarrhini</taxon>
        <taxon>Hominidae</taxon>
        <taxon>Pongo</taxon>
    </lineage>
</organism>
<sequence length="130" mass="14874">MVRMNVLADALKSINNAEKRGKRQVLIRPCSKVIVRFLTVMMKHGYIGEFEIIDDHRAGKIVVNLTGRLNKCGVISPRFDVQLKDLEKWQNNLFPSRQFGFIVLTTSAGIMDHEEARRKHTGGKILGFFF</sequence>
<feature type="chain" id="PRO_0000273559" description="Small ribosomal subunit protein uS8">
    <location>
        <begin position="1"/>
        <end position="130"/>
    </location>
</feature>
<feature type="modified residue" description="N6-succinyllysine" evidence="2">
    <location>
        <position position="88"/>
    </location>
</feature>
<gene>
    <name type="primary">RPS15A</name>
</gene>
<evidence type="ECO:0000250" key="1">
    <source>
        <dbReference type="UniProtKB" id="P62244"/>
    </source>
</evidence>
<evidence type="ECO:0000250" key="2">
    <source>
        <dbReference type="UniProtKB" id="P62245"/>
    </source>
</evidence>
<evidence type="ECO:0000305" key="3"/>
<name>RS15A_PONAB</name>
<comment type="function">
    <text evidence="1">Component of the small ribosomal subunit. Part of the small subunit (SSU) processome, first precursor of the small eukaryotic ribosomal subunit. During the assembly of the SSU processome in the nucleolus, many ribosome biogenesis factors, an RNA chaperone and ribosomal proteins associate with the nascent pre-rRNA and work in concert to generate RNA folding, modifications, rearrangements and cleavage as well as targeted degradation of pre-ribosomal RNA by the RNA exosome. Required for proper erythropoiesis.</text>
</comment>
<comment type="subunit">
    <text evidence="1">Component of the 40S ribosomal subunit. Part of the small subunit (SSU) processome, composed of more than 70 proteins and the RNA chaperone small nucleolar RNA (snoRNA) U3.</text>
</comment>
<comment type="subcellular location">
    <subcellularLocation>
        <location evidence="1">Cytoplasm</location>
    </subcellularLocation>
    <subcellularLocation>
        <location evidence="1">Nucleus</location>
        <location evidence="1">Nucleolus</location>
    </subcellularLocation>
</comment>
<comment type="similarity">
    <text evidence="3">Belongs to the universal ribosomal protein uS8 family.</text>
</comment>
<reference key="1">
    <citation type="submission" date="2004-11" db="EMBL/GenBank/DDBJ databases">
        <authorList>
            <consortium name="The German cDNA consortium"/>
        </authorList>
    </citation>
    <scope>NUCLEOTIDE SEQUENCE [LARGE SCALE MRNA]</scope>
    <source>
        <tissue>Heart</tissue>
    </source>
</reference>
<dbReference type="EMBL" id="CR859557">
    <property type="protein sequence ID" value="CAH91722.1"/>
    <property type="molecule type" value="mRNA"/>
</dbReference>
<dbReference type="RefSeq" id="NP_001126001.1">
    <property type="nucleotide sequence ID" value="NM_001132529.2"/>
</dbReference>
<dbReference type="SMR" id="Q5R938"/>
<dbReference type="STRING" id="9601.ENSPPYP00000008070"/>
<dbReference type="GeneID" id="100172942"/>
<dbReference type="KEGG" id="pon:100172942"/>
<dbReference type="CTD" id="6210"/>
<dbReference type="eggNOG" id="KOG1754">
    <property type="taxonomic scope" value="Eukaryota"/>
</dbReference>
<dbReference type="InParanoid" id="Q5R938"/>
<dbReference type="OrthoDB" id="10250260at2759"/>
<dbReference type="Proteomes" id="UP000001595">
    <property type="component" value="Unplaced"/>
</dbReference>
<dbReference type="GO" id="GO:0005737">
    <property type="term" value="C:cytoplasm"/>
    <property type="evidence" value="ECO:0007669"/>
    <property type="project" value="UniProtKB-SubCell"/>
</dbReference>
<dbReference type="GO" id="GO:0005730">
    <property type="term" value="C:nucleolus"/>
    <property type="evidence" value="ECO:0007669"/>
    <property type="project" value="UniProtKB-SubCell"/>
</dbReference>
<dbReference type="GO" id="GO:0005840">
    <property type="term" value="C:ribosome"/>
    <property type="evidence" value="ECO:0007669"/>
    <property type="project" value="UniProtKB-KW"/>
</dbReference>
<dbReference type="GO" id="GO:0032040">
    <property type="term" value="C:small-subunit processome"/>
    <property type="evidence" value="ECO:0000250"/>
    <property type="project" value="UniProtKB"/>
</dbReference>
<dbReference type="GO" id="GO:0003735">
    <property type="term" value="F:structural constituent of ribosome"/>
    <property type="evidence" value="ECO:0007669"/>
    <property type="project" value="InterPro"/>
</dbReference>
<dbReference type="GO" id="GO:0042274">
    <property type="term" value="P:ribosomal small subunit biogenesis"/>
    <property type="evidence" value="ECO:0000250"/>
    <property type="project" value="UniProtKB"/>
</dbReference>
<dbReference type="GO" id="GO:0006412">
    <property type="term" value="P:translation"/>
    <property type="evidence" value="ECO:0007669"/>
    <property type="project" value="InterPro"/>
</dbReference>
<dbReference type="FunFam" id="3.30.1370.30:FF:000001">
    <property type="entry name" value="40S ribosomal protein S15a"/>
    <property type="match status" value="1"/>
</dbReference>
<dbReference type="FunFam" id="3.30.1490.10:FF:000002">
    <property type="entry name" value="40S ribosomal protein S15a"/>
    <property type="match status" value="1"/>
</dbReference>
<dbReference type="Gene3D" id="3.30.1370.30">
    <property type="match status" value="1"/>
</dbReference>
<dbReference type="Gene3D" id="3.30.1490.10">
    <property type="match status" value="1"/>
</dbReference>
<dbReference type="InterPro" id="IPR000630">
    <property type="entry name" value="Ribosomal_uS8"/>
</dbReference>
<dbReference type="InterPro" id="IPR047863">
    <property type="entry name" value="Ribosomal_uS8_CS"/>
</dbReference>
<dbReference type="InterPro" id="IPR035987">
    <property type="entry name" value="Ribosomal_uS8_sf"/>
</dbReference>
<dbReference type="NCBIfam" id="NF003115">
    <property type="entry name" value="PRK04034.1"/>
    <property type="match status" value="1"/>
</dbReference>
<dbReference type="PANTHER" id="PTHR11758">
    <property type="entry name" value="40S RIBOSOMAL PROTEIN S15A"/>
    <property type="match status" value="1"/>
</dbReference>
<dbReference type="Pfam" id="PF00410">
    <property type="entry name" value="Ribosomal_S8"/>
    <property type="match status" value="1"/>
</dbReference>
<dbReference type="SUPFAM" id="SSF56047">
    <property type="entry name" value="Ribosomal protein S8"/>
    <property type="match status" value="1"/>
</dbReference>
<dbReference type="PROSITE" id="PS00053">
    <property type="entry name" value="RIBOSOMAL_S8"/>
    <property type="match status" value="1"/>
</dbReference>
<protein>
    <recommendedName>
        <fullName evidence="3">Small ribosomal subunit protein uS8</fullName>
    </recommendedName>
    <alternativeName>
        <fullName>40S ribosomal protein S15a</fullName>
    </alternativeName>
</protein>
<accession>Q5R938</accession>
<proteinExistence type="evidence at transcript level"/>
<keyword id="KW-0963">Cytoplasm</keyword>
<keyword id="KW-0539">Nucleus</keyword>
<keyword id="KW-1185">Reference proteome</keyword>
<keyword id="KW-0687">Ribonucleoprotein</keyword>
<keyword id="KW-0689">Ribosomal protein</keyword>